<reference key="1">
    <citation type="submission" date="1993-09" db="EMBL/GenBank/DDBJ databases">
        <title>Expression of the gene encoding zona-pellucida-binding protein, sp38, during spermatogenesis.</title>
        <authorList>
            <person name="Baba T."/>
            <person name="Mori E."/>
            <person name="Mori T."/>
            <person name="Kashiwabara S."/>
            <person name="Tanaka K."/>
        </authorList>
    </citation>
    <scope>NUCLEOTIDE SEQUENCE [MRNA]</scope>
    <source>
        <strain>ddY</strain>
        <tissue>Testis</tissue>
    </source>
</reference>
<reference key="2">
    <citation type="journal article" date="2005" name="Science">
        <title>The transcriptional landscape of the mammalian genome.</title>
        <authorList>
            <person name="Carninci P."/>
            <person name="Kasukawa T."/>
            <person name="Katayama S."/>
            <person name="Gough J."/>
            <person name="Frith M.C."/>
            <person name="Maeda N."/>
            <person name="Oyama R."/>
            <person name="Ravasi T."/>
            <person name="Lenhard B."/>
            <person name="Wells C."/>
            <person name="Kodzius R."/>
            <person name="Shimokawa K."/>
            <person name="Bajic V.B."/>
            <person name="Brenner S.E."/>
            <person name="Batalov S."/>
            <person name="Forrest A.R."/>
            <person name="Zavolan M."/>
            <person name="Davis M.J."/>
            <person name="Wilming L.G."/>
            <person name="Aidinis V."/>
            <person name="Allen J.E."/>
            <person name="Ambesi-Impiombato A."/>
            <person name="Apweiler R."/>
            <person name="Aturaliya R.N."/>
            <person name="Bailey T.L."/>
            <person name="Bansal M."/>
            <person name="Baxter L."/>
            <person name="Beisel K.W."/>
            <person name="Bersano T."/>
            <person name="Bono H."/>
            <person name="Chalk A.M."/>
            <person name="Chiu K.P."/>
            <person name="Choudhary V."/>
            <person name="Christoffels A."/>
            <person name="Clutterbuck D.R."/>
            <person name="Crowe M.L."/>
            <person name="Dalla E."/>
            <person name="Dalrymple B.P."/>
            <person name="de Bono B."/>
            <person name="Della Gatta G."/>
            <person name="di Bernardo D."/>
            <person name="Down T."/>
            <person name="Engstrom P."/>
            <person name="Fagiolini M."/>
            <person name="Faulkner G."/>
            <person name="Fletcher C.F."/>
            <person name="Fukushima T."/>
            <person name="Furuno M."/>
            <person name="Futaki S."/>
            <person name="Gariboldi M."/>
            <person name="Georgii-Hemming P."/>
            <person name="Gingeras T.R."/>
            <person name="Gojobori T."/>
            <person name="Green R.E."/>
            <person name="Gustincich S."/>
            <person name="Harbers M."/>
            <person name="Hayashi Y."/>
            <person name="Hensch T.K."/>
            <person name="Hirokawa N."/>
            <person name="Hill D."/>
            <person name="Huminiecki L."/>
            <person name="Iacono M."/>
            <person name="Ikeo K."/>
            <person name="Iwama A."/>
            <person name="Ishikawa T."/>
            <person name="Jakt M."/>
            <person name="Kanapin A."/>
            <person name="Katoh M."/>
            <person name="Kawasawa Y."/>
            <person name="Kelso J."/>
            <person name="Kitamura H."/>
            <person name="Kitano H."/>
            <person name="Kollias G."/>
            <person name="Krishnan S.P."/>
            <person name="Kruger A."/>
            <person name="Kummerfeld S.K."/>
            <person name="Kurochkin I.V."/>
            <person name="Lareau L.F."/>
            <person name="Lazarevic D."/>
            <person name="Lipovich L."/>
            <person name="Liu J."/>
            <person name="Liuni S."/>
            <person name="McWilliam S."/>
            <person name="Madan Babu M."/>
            <person name="Madera M."/>
            <person name="Marchionni L."/>
            <person name="Matsuda H."/>
            <person name="Matsuzawa S."/>
            <person name="Miki H."/>
            <person name="Mignone F."/>
            <person name="Miyake S."/>
            <person name="Morris K."/>
            <person name="Mottagui-Tabar S."/>
            <person name="Mulder N."/>
            <person name="Nakano N."/>
            <person name="Nakauchi H."/>
            <person name="Ng P."/>
            <person name="Nilsson R."/>
            <person name="Nishiguchi S."/>
            <person name="Nishikawa S."/>
            <person name="Nori F."/>
            <person name="Ohara O."/>
            <person name="Okazaki Y."/>
            <person name="Orlando V."/>
            <person name="Pang K.C."/>
            <person name="Pavan W.J."/>
            <person name="Pavesi G."/>
            <person name="Pesole G."/>
            <person name="Petrovsky N."/>
            <person name="Piazza S."/>
            <person name="Reed J."/>
            <person name="Reid J.F."/>
            <person name="Ring B.Z."/>
            <person name="Ringwald M."/>
            <person name="Rost B."/>
            <person name="Ruan Y."/>
            <person name="Salzberg S.L."/>
            <person name="Sandelin A."/>
            <person name="Schneider C."/>
            <person name="Schoenbach C."/>
            <person name="Sekiguchi K."/>
            <person name="Semple C.A."/>
            <person name="Seno S."/>
            <person name="Sessa L."/>
            <person name="Sheng Y."/>
            <person name="Shibata Y."/>
            <person name="Shimada H."/>
            <person name="Shimada K."/>
            <person name="Silva D."/>
            <person name="Sinclair B."/>
            <person name="Sperling S."/>
            <person name="Stupka E."/>
            <person name="Sugiura K."/>
            <person name="Sultana R."/>
            <person name="Takenaka Y."/>
            <person name="Taki K."/>
            <person name="Tammoja K."/>
            <person name="Tan S.L."/>
            <person name="Tang S."/>
            <person name="Taylor M.S."/>
            <person name="Tegner J."/>
            <person name="Teichmann S.A."/>
            <person name="Ueda H.R."/>
            <person name="van Nimwegen E."/>
            <person name="Verardo R."/>
            <person name="Wei C.L."/>
            <person name="Yagi K."/>
            <person name="Yamanishi H."/>
            <person name="Zabarovsky E."/>
            <person name="Zhu S."/>
            <person name="Zimmer A."/>
            <person name="Hide W."/>
            <person name="Bult C."/>
            <person name="Grimmond S.M."/>
            <person name="Teasdale R.D."/>
            <person name="Liu E.T."/>
            <person name="Brusic V."/>
            <person name="Quackenbush J."/>
            <person name="Wahlestedt C."/>
            <person name="Mattick J.S."/>
            <person name="Hume D.A."/>
            <person name="Kai C."/>
            <person name="Sasaki D."/>
            <person name="Tomaru Y."/>
            <person name="Fukuda S."/>
            <person name="Kanamori-Katayama M."/>
            <person name="Suzuki M."/>
            <person name="Aoki J."/>
            <person name="Arakawa T."/>
            <person name="Iida J."/>
            <person name="Imamura K."/>
            <person name="Itoh M."/>
            <person name="Kato T."/>
            <person name="Kawaji H."/>
            <person name="Kawagashira N."/>
            <person name="Kawashima T."/>
            <person name="Kojima M."/>
            <person name="Kondo S."/>
            <person name="Konno H."/>
            <person name="Nakano K."/>
            <person name="Ninomiya N."/>
            <person name="Nishio T."/>
            <person name="Okada M."/>
            <person name="Plessy C."/>
            <person name="Shibata K."/>
            <person name="Shiraki T."/>
            <person name="Suzuki S."/>
            <person name="Tagami M."/>
            <person name="Waki K."/>
            <person name="Watahiki A."/>
            <person name="Okamura-Oho Y."/>
            <person name="Suzuki H."/>
            <person name="Kawai J."/>
            <person name="Hayashizaki Y."/>
        </authorList>
    </citation>
    <scope>NUCLEOTIDE SEQUENCE [LARGE SCALE MRNA] OF 144-350</scope>
    <source>
        <strain>C57BL/6J</strain>
        <tissue>Testis</tissue>
    </source>
</reference>
<reference key="3">
    <citation type="journal article" date="2007" name="Mol. Cell. Biol.">
        <title>Loss of zona pellucida binding proteins in the acrosomal matrix disrupts acrosome biogenesis and sperm morphogenesis.</title>
        <authorList>
            <person name="Lin Y.N."/>
            <person name="Roy A."/>
            <person name="Yan W."/>
            <person name="Burns K.H."/>
            <person name="Matzuk M.M."/>
        </authorList>
    </citation>
    <scope>FUNCTION</scope>
    <scope>SUBCELLULAR LOCATION</scope>
    <scope>TISSUE SPECIFICITY</scope>
    <scope>DEVELOPMENTAL STAGE</scope>
    <scope>GLYCOSYLATION</scope>
    <scope>DISRUPTION PHENOTYPE</scope>
</reference>
<reference key="4">
    <citation type="journal article" date="2009" name="Microsc. Res. Tech.">
        <title>The origin and assembly of a zona pellucida binding protein, IAM38, during spermiogenesis.</title>
        <authorList>
            <person name="Yu Y."/>
            <person name="Vanhorne J."/>
            <person name="Oko R."/>
        </authorList>
    </citation>
    <scope>SUBCELLULAR LOCATION</scope>
    <scope>TISSUE SPECIFICITY</scope>
    <scope>DEVELOPMENTAL STAGE</scope>
</reference>
<reference key="5">
    <citation type="journal article" date="2010" name="Cell">
        <title>A tissue-specific atlas of mouse protein phosphorylation and expression.</title>
        <authorList>
            <person name="Huttlin E.L."/>
            <person name="Jedrychowski M.P."/>
            <person name="Elias J.E."/>
            <person name="Goswami T."/>
            <person name="Rad R."/>
            <person name="Beausoleil S.A."/>
            <person name="Villen J."/>
            <person name="Haas W."/>
            <person name="Sowa M.E."/>
            <person name="Gygi S.P."/>
        </authorList>
    </citation>
    <scope>IDENTIFICATION BY MASS SPECTROMETRY [LARGE SCALE ANALYSIS]</scope>
    <source>
        <tissue>Testis</tissue>
    </source>
</reference>
<gene>
    <name type="primary">Zpbp</name>
    <name type="synonym">Zpbp1</name>
</gene>
<comment type="function">
    <text evidence="3">Plays a role in acrosome compaction and sperm morphogenesis. Is implicated in sperm-oocyte interaction during fertilization.</text>
</comment>
<comment type="subcellular location">
    <subcellularLocation>
        <location evidence="1">Cytoplasmic vesicle</location>
        <location evidence="1">Secretory vesicle</location>
        <location evidence="1">Acrosome</location>
    </subcellularLocation>
    <subcellularLocation>
        <location evidence="3 4">Cytoplasmic vesicle</location>
        <location evidence="3 4">Secretory vesicle</location>
        <location evidence="3 4">Acrosome membrane</location>
        <topology evidence="7">Peripheral membrane protein</topology>
    </subcellularLocation>
    <subcellularLocation>
        <location evidence="6">Secreted</location>
    </subcellularLocation>
    <text evidence="3 4">First localized in acrosome granule, later migrates to the inner and outer acrosomal membrane (PubMed:19204925). Released after the acrosomal reaction (PubMed:17664285).</text>
</comment>
<comment type="tissue specificity">
    <text evidence="3 4">Expressed in testis (at protein level) (PubMed:19204925). Expressed in male germ cells (PubMed:17664285).</text>
</comment>
<comment type="developmental stage">
    <text evidence="3 4">Barely detectable at 11 days postpartum (dpp), very strong signal from 20 dpp until adulthood (PubMed:19204925). Expressed from the mid-pachytene spermatocyte stage to the early elongating spermatid stage (PubMed:17664285, PubMed:19204925).</text>
</comment>
<comment type="PTM">
    <text evidence="3 4">N-glycosylated.</text>
</comment>
<comment type="disruption phenotype">
    <text evidence="3">Male mice are infertile with abnormal round-headed sperm morphology and no forward sperm motility.</text>
</comment>
<comment type="similarity">
    <text evidence="6">Belongs to the zona pellucida-binding protein Sp38 family.</text>
</comment>
<comment type="sequence caution" evidence="6">
    <conflict type="erroneous initiation">
        <sequence resource="EMBL-CDS" id="BAA04494"/>
    </conflict>
</comment>
<protein>
    <recommendedName>
        <fullName>Zona pellucida-binding protein 1</fullName>
    </recommendedName>
    <alternativeName>
        <fullName evidence="5">Inner acrosomal membrane IAM38</fullName>
    </alternativeName>
    <alternativeName>
        <fullName>Sp38</fullName>
    </alternativeName>
</protein>
<accession>Q62522</accession>
<accession>Q9CR97</accession>
<name>ZPBP1_MOUSE</name>
<organism>
    <name type="scientific">Mus musculus</name>
    <name type="common">Mouse</name>
    <dbReference type="NCBI Taxonomy" id="10090"/>
    <lineage>
        <taxon>Eukaryota</taxon>
        <taxon>Metazoa</taxon>
        <taxon>Chordata</taxon>
        <taxon>Craniata</taxon>
        <taxon>Vertebrata</taxon>
        <taxon>Euteleostomi</taxon>
        <taxon>Mammalia</taxon>
        <taxon>Eutheria</taxon>
        <taxon>Euarchontoglires</taxon>
        <taxon>Glires</taxon>
        <taxon>Rodentia</taxon>
        <taxon>Myomorpha</taxon>
        <taxon>Muroidea</taxon>
        <taxon>Muridae</taxon>
        <taxon>Murinae</taxon>
        <taxon>Mus</taxon>
        <taxon>Mus</taxon>
    </lineage>
</organism>
<dbReference type="EMBL" id="D17569">
    <property type="protein sequence ID" value="BAA04494.1"/>
    <property type="status" value="ALT_INIT"/>
    <property type="molecule type" value="mRNA"/>
</dbReference>
<dbReference type="EMBL" id="AK006274">
    <property type="protein sequence ID" value="BAB24497.1"/>
    <property type="molecule type" value="mRNA"/>
</dbReference>
<dbReference type="EMBL" id="AK018889">
    <property type="protein sequence ID" value="BAB31476.1"/>
    <property type="molecule type" value="mRNA"/>
</dbReference>
<dbReference type="EMBL" id="AK018921">
    <property type="protein sequence ID" value="BAB31483.1"/>
    <property type="molecule type" value="mRNA"/>
</dbReference>
<dbReference type="EMBL" id="AK029541">
    <property type="protein sequence ID" value="BAC26504.1"/>
    <property type="molecule type" value="mRNA"/>
</dbReference>
<dbReference type="RefSeq" id="NP_056600.1">
    <property type="nucleotide sequence ID" value="NM_015785.2"/>
</dbReference>
<dbReference type="FunCoup" id="Q62522">
    <property type="interactions" value="22"/>
</dbReference>
<dbReference type="STRING" id="10090.ENSMUSP00000020413"/>
<dbReference type="GlyCosmos" id="Q62522">
    <property type="glycosylation" value="3 sites, No reported glycans"/>
</dbReference>
<dbReference type="GlyGen" id="Q62522">
    <property type="glycosylation" value="3 sites"/>
</dbReference>
<dbReference type="PhosphoSitePlus" id="Q62522"/>
<dbReference type="PaxDb" id="10090-ENSMUSP00000020413"/>
<dbReference type="ProteomicsDB" id="275239"/>
<dbReference type="GeneID" id="53604"/>
<dbReference type="KEGG" id="mmu:53604"/>
<dbReference type="AGR" id="MGI:1855701"/>
<dbReference type="CTD" id="11055"/>
<dbReference type="MGI" id="MGI:1855701">
    <property type="gene designation" value="Zpbp"/>
</dbReference>
<dbReference type="eggNOG" id="ENOG502RJ20">
    <property type="taxonomic scope" value="Eukaryota"/>
</dbReference>
<dbReference type="InParanoid" id="Q62522"/>
<dbReference type="OrthoDB" id="9045220at2759"/>
<dbReference type="BioGRID-ORCS" id="53604">
    <property type="hits" value="3 hits in 79 CRISPR screens"/>
</dbReference>
<dbReference type="ChiTaRS" id="Zpbp">
    <property type="organism name" value="mouse"/>
</dbReference>
<dbReference type="PRO" id="PR:Q62522"/>
<dbReference type="Proteomes" id="UP000000589">
    <property type="component" value="Unplaced"/>
</dbReference>
<dbReference type="RNAct" id="Q62522">
    <property type="molecule type" value="protein"/>
</dbReference>
<dbReference type="GO" id="GO:0002080">
    <property type="term" value="C:acrosomal membrane"/>
    <property type="evidence" value="ECO:0007669"/>
    <property type="project" value="UniProtKB-SubCell"/>
</dbReference>
<dbReference type="GO" id="GO:0001669">
    <property type="term" value="C:acrosomal vesicle"/>
    <property type="evidence" value="ECO:0000314"/>
    <property type="project" value="MGI"/>
</dbReference>
<dbReference type="GO" id="GO:0044297">
    <property type="term" value="C:cell body"/>
    <property type="evidence" value="ECO:0000314"/>
    <property type="project" value="MGI"/>
</dbReference>
<dbReference type="GO" id="GO:0005576">
    <property type="term" value="C:extracellular region"/>
    <property type="evidence" value="ECO:0007669"/>
    <property type="project" value="UniProtKB-SubCell"/>
</dbReference>
<dbReference type="GO" id="GO:0002199">
    <property type="term" value="C:zona pellucida receptor complex"/>
    <property type="evidence" value="ECO:0000314"/>
    <property type="project" value="MGI"/>
</dbReference>
<dbReference type="GO" id="GO:0001675">
    <property type="term" value="P:acrosome assembly"/>
    <property type="evidence" value="ECO:0000315"/>
    <property type="project" value="MGI"/>
</dbReference>
<dbReference type="GO" id="GO:0007339">
    <property type="term" value="P:binding of sperm to zona pellucida"/>
    <property type="evidence" value="ECO:0000314"/>
    <property type="project" value="MGI"/>
</dbReference>
<dbReference type="Gene3D" id="2.60.40.10">
    <property type="entry name" value="Immunoglobulins"/>
    <property type="match status" value="1"/>
</dbReference>
<dbReference type="InterPro" id="IPR013783">
    <property type="entry name" value="Ig-like_fold"/>
</dbReference>
<dbReference type="InterPro" id="IPR010857">
    <property type="entry name" value="Sp38-bd"/>
</dbReference>
<dbReference type="InterPro" id="IPR048805">
    <property type="entry name" value="ZPBP1/2_C"/>
</dbReference>
<dbReference type="InterPro" id="IPR048806">
    <property type="entry name" value="ZPBP1/2_N"/>
</dbReference>
<dbReference type="PANTHER" id="PTHR15443">
    <property type="entry name" value="ZONA PELLUCIDA BINDING PROTEIN SP38"/>
    <property type="match status" value="1"/>
</dbReference>
<dbReference type="PANTHER" id="PTHR15443:SF5">
    <property type="entry name" value="ZONA PELLUCIDA-BINDING PROTEIN 1"/>
    <property type="match status" value="1"/>
</dbReference>
<dbReference type="Pfam" id="PF20626">
    <property type="entry name" value="EGF_Sp38_C"/>
    <property type="match status" value="1"/>
</dbReference>
<dbReference type="Pfam" id="PF07354">
    <property type="entry name" value="Sp38"/>
    <property type="match status" value="1"/>
</dbReference>
<sequence length="350" mass="39232">MEALAPGRAPRGRRRAGASGSVLSPLSLAAVLLCALLRAPPAVGHLARLPRSIHLTQDSLKIVGSTHFPVSVYVMLHQKSPHVLCVTQRLRNTELVDPSFQWHGPKGKLVSENTTAQVTSTGSLIFQSFEETMSGVYTCFLEYKPTVEESIKNLQLKYIVYAYREPRFYYQFTARYHAAPCNSIYNISFEKKLLQILSKLVLDLSCEISLIKSECHRVKMQRAGLQNELFFTFSVASIDTEKGSKPCTDHSCEASKRLSKAKNLIERFFIQQVEVLGKRAEPLPEIYYIEGTLQMVWVNRCFPGYGINVLKHPKCPECCVVCSPGSFNPRDGTHCLQCNNSLVYGAKTCM</sequence>
<feature type="signal peptide" evidence="2">
    <location>
        <begin position="1"/>
        <end position="44"/>
    </location>
</feature>
<feature type="chain" id="PRO_0000041599" description="Zona pellucida-binding protein 1">
    <location>
        <begin position="45"/>
        <end position="350"/>
    </location>
</feature>
<feature type="glycosylation site" description="N-linked (GlcNAc...) asparagine" evidence="2">
    <location>
        <position position="113"/>
    </location>
</feature>
<feature type="glycosylation site" description="N-linked (GlcNAc...) asparagine" evidence="2">
    <location>
        <position position="186"/>
    </location>
</feature>
<feature type="glycosylation site" description="N-linked (GlcNAc...) asparagine" evidence="2">
    <location>
        <position position="339"/>
    </location>
</feature>
<proteinExistence type="evidence at protein level"/>
<keyword id="KW-0968">Cytoplasmic vesicle</keyword>
<keyword id="KW-0325">Glycoprotein</keyword>
<keyword id="KW-0472">Membrane</keyword>
<keyword id="KW-1185">Reference proteome</keyword>
<keyword id="KW-0964">Secreted</keyword>
<keyword id="KW-0732">Signal</keyword>
<evidence type="ECO:0000250" key="1">
    <source>
        <dbReference type="UniProtKB" id="Q9BS86"/>
    </source>
</evidence>
<evidence type="ECO:0000255" key="2"/>
<evidence type="ECO:0000269" key="3">
    <source>
    </source>
</evidence>
<evidence type="ECO:0000269" key="4">
    <source>
    </source>
</evidence>
<evidence type="ECO:0000303" key="5">
    <source>
    </source>
</evidence>
<evidence type="ECO:0000305" key="6"/>
<evidence type="ECO:0000305" key="7">
    <source>
    </source>
</evidence>